<feature type="chain" id="PRO_0000052172" description="Cytochrome P450 85A1">
    <location>
        <begin position="1"/>
        <end position="469"/>
    </location>
</feature>
<feature type="transmembrane region" description="Helical" evidence="2">
    <location>
        <begin position="1"/>
        <end position="21"/>
    </location>
</feature>
<feature type="binding site" description="axial binding residue" evidence="1">
    <location>
        <position position="419"/>
    </location>
    <ligand>
        <name>heme</name>
        <dbReference type="ChEBI" id="CHEBI:30413"/>
    </ligand>
    <ligandPart>
        <name>Fe</name>
        <dbReference type="ChEBI" id="CHEBI:18248"/>
    </ligandPart>
</feature>
<feature type="mutagenesis site" description="In brd1-3; dwarf and defective in brassinosteroid biosynthesis." evidence="4">
    <original>G</original>
    <variation>V</variation>
    <location>
        <position position="101"/>
    </location>
</feature>
<feature type="mutagenesis site" description="In brd1-2; dwarf and defective in brassinosteroid biosynthesis." evidence="4">
    <original>G</original>
    <variation>V</variation>
    <location>
        <position position="111"/>
    </location>
</feature>
<organism>
    <name type="scientific">Oryza sativa subsp. japonica</name>
    <name type="common">Rice</name>
    <dbReference type="NCBI Taxonomy" id="39947"/>
    <lineage>
        <taxon>Eukaryota</taxon>
        <taxon>Viridiplantae</taxon>
        <taxon>Streptophyta</taxon>
        <taxon>Embryophyta</taxon>
        <taxon>Tracheophyta</taxon>
        <taxon>Spermatophyta</taxon>
        <taxon>Magnoliopsida</taxon>
        <taxon>Liliopsida</taxon>
        <taxon>Poales</taxon>
        <taxon>Poaceae</taxon>
        <taxon>BOP clade</taxon>
        <taxon>Oryzoideae</taxon>
        <taxon>Oryzeae</taxon>
        <taxon>Oryzinae</taxon>
        <taxon>Oryza</taxon>
        <taxon>Oryza sativa</taxon>
    </lineage>
</organism>
<proteinExistence type="evidence at protein level"/>
<reference key="1">
    <citation type="journal article" date="2002" name="Plant J.">
        <title>Loss-of-function of a rice brassinosteroid biosynthetic enzyme, C-6 oxidase, prevents the organized arrangement and polar elongation of cells in the leaves and stem.</title>
        <authorList>
            <person name="Hong Z."/>
            <person name="Ueguchi-Tanaka M."/>
            <person name="Shimizu-Sato S."/>
            <person name="Inukai Y."/>
            <person name="Fujioka S."/>
            <person name="Shimada Y."/>
            <person name="Takatsuto S."/>
            <person name="Agetsuma M."/>
            <person name="Yoshida S."/>
            <person name="Watanabe Y."/>
            <person name="Uozu S."/>
            <person name="Kitano H."/>
            <person name="Ashikari M."/>
            <person name="Matsuoka M."/>
        </authorList>
    </citation>
    <scope>NUCLEOTIDE SEQUENCE [MRNA]</scope>
    <scope>FUNCTION</scope>
    <scope>CATALYTIC ACTIVITY</scope>
    <scope>PATHWAY</scope>
    <scope>TISSUE SPECIFICITY</scope>
    <scope>INDUCTION</scope>
    <scope>MUTAGENESIS OF GLY-101 AND GLY-111</scope>
    <scope>DISRUPTION PHENOTYPE</scope>
    <source>
        <strain>cv. Nipponbare</strain>
    </source>
</reference>
<reference key="2">
    <citation type="journal article" date="2005" name="Genome Res.">
        <title>Sequence, annotation, and analysis of synteny between rice chromosome 3 and diverged grass species.</title>
        <authorList>
            <consortium name="The rice chromosome 3 sequencing consortium"/>
            <person name="Buell C.R."/>
            <person name="Yuan Q."/>
            <person name="Ouyang S."/>
            <person name="Liu J."/>
            <person name="Zhu W."/>
            <person name="Wang A."/>
            <person name="Maiti R."/>
            <person name="Haas B."/>
            <person name="Wortman J."/>
            <person name="Pertea M."/>
            <person name="Jones K.M."/>
            <person name="Kim M."/>
            <person name="Overton L."/>
            <person name="Tsitrin T."/>
            <person name="Fadrosh D."/>
            <person name="Bera J."/>
            <person name="Weaver B."/>
            <person name="Jin S."/>
            <person name="Johri S."/>
            <person name="Reardon M."/>
            <person name="Webb K."/>
            <person name="Hill J."/>
            <person name="Moffat K."/>
            <person name="Tallon L."/>
            <person name="Van Aken S."/>
            <person name="Lewis M."/>
            <person name="Utterback T."/>
            <person name="Feldblyum T."/>
            <person name="Zismann V."/>
            <person name="Iobst S."/>
            <person name="Hsiao J."/>
            <person name="de Vazeille A.R."/>
            <person name="Salzberg S.L."/>
            <person name="White O."/>
            <person name="Fraser C.M."/>
            <person name="Yu Y."/>
            <person name="Kim H."/>
            <person name="Rambo T."/>
            <person name="Currie J."/>
            <person name="Collura K."/>
            <person name="Kernodle-Thompson S."/>
            <person name="Wei F."/>
            <person name="Kudrna K."/>
            <person name="Ammiraju J.S.S."/>
            <person name="Luo M."/>
            <person name="Goicoechea J.L."/>
            <person name="Wing R.A."/>
            <person name="Henry D."/>
            <person name="Oates R."/>
            <person name="Palmer M."/>
            <person name="Pries G."/>
            <person name="Saski C."/>
            <person name="Simmons J."/>
            <person name="Soderlund C."/>
            <person name="Nelson W."/>
            <person name="de la Bastide M."/>
            <person name="Spiegel L."/>
            <person name="Nascimento L."/>
            <person name="Huang E."/>
            <person name="Preston R."/>
            <person name="Zutavern T."/>
            <person name="Palmer L."/>
            <person name="O'Shaughnessy A."/>
            <person name="Dike S."/>
            <person name="McCombie W.R."/>
            <person name="Minx P."/>
            <person name="Cordum H."/>
            <person name="Wilson R."/>
            <person name="Jin W."/>
            <person name="Lee H.R."/>
            <person name="Jiang J."/>
            <person name="Jackson S."/>
        </authorList>
    </citation>
    <scope>NUCLEOTIDE SEQUENCE [LARGE SCALE GENOMIC DNA]</scope>
    <source>
        <strain>cv. Nipponbare</strain>
    </source>
</reference>
<reference key="3">
    <citation type="journal article" date="2005" name="Nature">
        <title>The map-based sequence of the rice genome.</title>
        <authorList>
            <consortium name="International rice genome sequencing project (IRGSP)"/>
        </authorList>
    </citation>
    <scope>NUCLEOTIDE SEQUENCE [LARGE SCALE GENOMIC DNA]</scope>
    <source>
        <strain>cv. Nipponbare</strain>
    </source>
</reference>
<reference key="4">
    <citation type="journal article" date="2008" name="Nucleic Acids Res.">
        <title>The rice annotation project database (RAP-DB): 2008 update.</title>
        <authorList>
            <consortium name="The rice annotation project (RAP)"/>
        </authorList>
    </citation>
    <scope>GENOME REANNOTATION</scope>
    <source>
        <strain>cv. Nipponbare</strain>
    </source>
</reference>
<reference key="5">
    <citation type="journal article" date="2013" name="Rice">
        <title>Improvement of the Oryza sativa Nipponbare reference genome using next generation sequence and optical map data.</title>
        <authorList>
            <person name="Kawahara Y."/>
            <person name="de la Bastide M."/>
            <person name="Hamilton J.P."/>
            <person name="Kanamori H."/>
            <person name="McCombie W.R."/>
            <person name="Ouyang S."/>
            <person name="Schwartz D.C."/>
            <person name="Tanaka T."/>
            <person name="Wu J."/>
            <person name="Zhou S."/>
            <person name="Childs K.L."/>
            <person name="Davidson R.M."/>
            <person name="Lin H."/>
            <person name="Quesada-Ocampo L."/>
            <person name="Vaillancourt B."/>
            <person name="Sakai H."/>
            <person name="Lee S.S."/>
            <person name="Kim J."/>
            <person name="Numa H."/>
            <person name="Itoh T."/>
            <person name="Buell C.R."/>
            <person name="Matsumoto T."/>
        </authorList>
    </citation>
    <scope>GENOME REANNOTATION</scope>
    <source>
        <strain>cv. Nipponbare</strain>
    </source>
</reference>
<reference key="6">
    <citation type="journal article" date="2003" name="Science">
        <title>Collection, mapping, and annotation of over 28,000 cDNA clones from japonica rice.</title>
        <authorList>
            <consortium name="The rice full-length cDNA consortium"/>
        </authorList>
    </citation>
    <scope>NUCLEOTIDE SEQUENCE [LARGE SCALE MRNA]</scope>
    <source>
        <strain>cv. Nipponbare</strain>
    </source>
</reference>
<reference key="7">
    <citation type="journal article" date="2002" name="Plant Physiol.">
        <title>Isolation and characterization of a rice dwarf mutant with a defect in brassinosteroid biosynthesis.</title>
        <authorList>
            <person name="Mori M."/>
            <person name="Nomura T."/>
            <person name="Ooka H."/>
            <person name="Ishizaka M."/>
            <person name="Yokota T."/>
            <person name="Sugimoto K."/>
            <person name="Okabe K."/>
            <person name="Kajiwara H."/>
            <person name="Satoh K."/>
            <person name="Yamamoto K."/>
            <person name="Hirochika H."/>
            <person name="Kikuchi S."/>
        </authorList>
    </citation>
    <scope>FUNCTION</scope>
    <scope>DISRUPTION PHENOTYPE</scope>
    <scope>CATALYTIC ACTIVITY</scope>
    <scope>PATHWAY</scope>
</reference>
<reference key="8">
    <citation type="journal article" date="2008" name="Biochem. Biophys. Res. Commun.">
        <title>Castasterone is a likely end product of brassinosteroid biosynthetic pathway in rice.</title>
        <authorList>
            <person name="Kim B.K."/>
            <person name="Fujioka S."/>
            <person name="Takatsuto S."/>
            <person name="Tsujimoto M."/>
            <person name="Choe S."/>
        </authorList>
    </citation>
    <scope>FUNCTION</scope>
</reference>
<accession>Q8GSQ1</accession>
<accession>Q10H45</accession>
<accession>Q84MZ2</accession>
<keyword id="KW-1069">Brassinosteroid biosynthesis</keyword>
<keyword id="KW-0349">Heme</keyword>
<keyword id="KW-0408">Iron</keyword>
<keyword id="KW-0444">Lipid biosynthesis</keyword>
<keyword id="KW-0443">Lipid metabolism</keyword>
<keyword id="KW-0472">Membrane</keyword>
<keyword id="KW-0479">Metal-binding</keyword>
<keyword id="KW-0503">Monooxygenase</keyword>
<keyword id="KW-0560">Oxidoreductase</keyword>
<keyword id="KW-1185">Reference proteome</keyword>
<keyword id="KW-0752">Steroid biosynthesis</keyword>
<keyword id="KW-0812">Transmembrane</keyword>
<keyword id="KW-1133">Transmembrane helix</keyword>
<protein>
    <recommendedName>
        <fullName evidence="8">Cytochrome P450 85A1</fullName>
        <shortName evidence="8">OsCYP85A1</shortName>
    </recommendedName>
    <alternativeName>
        <fullName evidence="6 7">3-dehydroteasterone synthase</fullName>
        <ecNumber evidence="3 4">1.14.14.-</ecNumber>
    </alternativeName>
    <alternativeName>
        <fullName evidence="6 7">C6-oxidase</fullName>
    </alternativeName>
    <alternativeName>
        <fullName evidence="6 7">Protein DWARF</fullName>
        <shortName evidence="6 7">OsDWARF</shortName>
    </alternativeName>
    <alternativeName>
        <fullName evidence="6 7">Teasterone synthase</fullName>
        <ecNumber evidence="3 4">1.14.14.-</ecNumber>
    </alternativeName>
    <alternativeName>
        <fullName evidence="6 7">Typhasterol synthase</fullName>
        <ecNumber evidence="3 4">1.14.14.-</ecNumber>
    </alternativeName>
</protein>
<name>C85A1_ORYSJ</name>
<dbReference type="EC" id="1.14.14.-" evidence="3 4"/>
<dbReference type="EMBL" id="AB084385">
    <property type="protein sequence ID" value="BAC45000.1"/>
    <property type="molecule type" value="mRNA"/>
</dbReference>
<dbReference type="EMBL" id="AC092778">
    <property type="protein sequence ID" value="AAP12898.1"/>
    <property type="molecule type" value="Genomic_DNA"/>
</dbReference>
<dbReference type="EMBL" id="AC097276">
    <property type="protein sequence ID" value="AAT81671.1"/>
    <property type="molecule type" value="Genomic_DNA"/>
</dbReference>
<dbReference type="EMBL" id="DP000009">
    <property type="protein sequence ID" value="ABF97501.1"/>
    <property type="molecule type" value="Genomic_DNA"/>
</dbReference>
<dbReference type="EMBL" id="AP008209">
    <property type="protein sequence ID" value="BAF12537.1"/>
    <property type="molecule type" value="Genomic_DNA"/>
</dbReference>
<dbReference type="EMBL" id="AP014959">
    <property type="protein sequence ID" value="BAS85202.1"/>
    <property type="molecule type" value="Genomic_DNA"/>
</dbReference>
<dbReference type="EMBL" id="AK072295">
    <property type="protein sequence ID" value="BAG92911.1"/>
    <property type="molecule type" value="mRNA"/>
</dbReference>
<dbReference type="RefSeq" id="XP_015631644.1">
    <property type="nucleotide sequence ID" value="XM_015776158.1"/>
</dbReference>
<dbReference type="SMR" id="Q8GSQ1"/>
<dbReference type="FunCoup" id="Q8GSQ1">
    <property type="interactions" value="411"/>
</dbReference>
<dbReference type="STRING" id="39947.Q8GSQ1"/>
<dbReference type="PaxDb" id="39947-Q8GSQ1"/>
<dbReference type="EnsemblPlants" id="Os03t0602300-01">
    <property type="protein sequence ID" value="Os03t0602300-01"/>
    <property type="gene ID" value="Os03g0602300"/>
</dbReference>
<dbReference type="Gramene" id="Os03t0602300-01">
    <property type="protein sequence ID" value="Os03t0602300-01"/>
    <property type="gene ID" value="Os03g0602300"/>
</dbReference>
<dbReference type="KEGG" id="dosa:Os03g0602300"/>
<dbReference type="eggNOG" id="KOG0157">
    <property type="taxonomic scope" value="Eukaryota"/>
</dbReference>
<dbReference type="HOGENOM" id="CLU_001570_15_5_1"/>
<dbReference type="InParanoid" id="Q8GSQ1"/>
<dbReference type="OMA" id="NQVKYNN"/>
<dbReference type="OrthoDB" id="1372046at2759"/>
<dbReference type="UniPathway" id="UPA00381"/>
<dbReference type="Proteomes" id="UP000000763">
    <property type="component" value="Chromosome 3"/>
</dbReference>
<dbReference type="Proteomes" id="UP000059680">
    <property type="component" value="Chromosome 3"/>
</dbReference>
<dbReference type="GO" id="GO:0016020">
    <property type="term" value="C:membrane"/>
    <property type="evidence" value="ECO:0007669"/>
    <property type="project" value="UniProtKB-SubCell"/>
</dbReference>
<dbReference type="GO" id="GO:0020037">
    <property type="term" value="F:heme binding"/>
    <property type="evidence" value="ECO:0007669"/>
    <property type="project" value="InterPro"/>
</dbReference>
<dbReference type="GO" id="GO:0005506">
    <property type="term" value="F:iron ion binding"/>
    <property type="evidence" value="ECO:0007669"/>
    <property type="project" value="InterPro"/>
</dbReference>
<dbReference type="GO" id="GO:0004497">
    <property type="term" value="F:monooxygenase activity"/>
    <property type="evidence" value="ECO:0000314"/>
    <property type="project" value="Gramene"/>
</dbReference>
<dbReference type="GO" id="GO:0016705">
    <property type="term" value="F:oxidoreductase activity, acting on paired donors, with incorporation or reduction of molecular oxygen"/>
    <property type="evidence" value="ECO:0007669"/>
    <property type="project" value="InterPro"/>
</dbReference>
<dbReference type="GO" id="GO:0016132">
    <property type="term" value="P:brassinosteroid biosynthetic process"/>
    <property type="evidence" value="ECO:0000318"/>
    <property type="project" value="GO_Central"/>
</dbReference>
<dbReference type="GO" id="GO:0010268">
    <property type="term" value="P:brassinosteroid homeostasis"/>
    <property type="evidence" value="ECO:0000315"/>
    <property type="project" value="Gramene"/>
</dbReference>
<dbReference type="GO" id="GO:0001578">
    <property type="term" value="P:microtubule bundle formation"/>
    <property type="evidence" value="ECO:0000315"/>
    <property type="project" value="Gramene"/>
</dbReference>
<dbReference type="GO" id="GO:0009647">
    <property type="term" value="P:skotomorphogenesis"/>
    <property type="evidence" value="ECO:0000315"/>
    <property type="project" value="Gramene"/>
</dbReference>
<dbReference type="CDD" id="cd11043">
    <property type="entry name" value="CYP90-like"/>
    <property type="match status" value="1"/>
</dbReference>
<dbReference type="FunFam" id="1.10.630.10:FF:000045">
    <property type="entry name" value="Cytochrome P450 85A1"/>
    <property type="match status" value="1"/>
</dbReference>
<dbReference type="Gene3D" id="1.10.630.10">
    <property type="entry name" value="Cytochrome P450"/>
    <property type="match status" value="1"/>
</dbReference>
<dbReference type="InterPro" id="IPR001128">
    <property type="entry name" value="Cyt_P450"/>
</dbReference>
<dbReference type="InterPro" id="IPR017972">
    <property type="entry name" value="Cyt_P450_CS"/>
</dbReference>
<dbReference type="InterPro" id="IPR002401">
    <property type="entry name" value="Cyt_P450_E_grp-I"/>
</dbReference>
<dbReference type="InterPro" id="IPR036396">
    <property type="entry name" value="Cyt_P450_sf"/>
</dbReference>
<dbReference type="PANTHER" id="PTHR24286">
    <property type="entry name" value="CYTOCHROME P450 26"/>
    <property type="match status" value="1"/>
</dbReference>
<dbReference type="PANTHER" id="PTHR24286:SF169">
    <property type="entry name" value="CYTOCHROME P450 85A1"/>
    <property type="match status" value="1"/>
</dbReference>
<dbReference type="Pfam" id="PF00067">
    <property type="entry name" value="p450"/>
    <property type="match status" value="1"/>
</dbReference>
<dbReference type="PRINTS" id="PR00463">
    <property type="entry name" value="EP450I"/>
</dbReference>
<dbReference type="PRINTS" id="PR00385">
    <property type="entry name" value="P450"/>
</dbReference>
<dbReference type="SUPFAM" id="SSF48264">
    <property type="entry name" value="Cytochrome P450"/>
    <property type="match status" value="1"/>
</dbReference>
<dbReference type="PROSITE" id="PS00086">
    <property type="entry name" value="CYTOCHROME_P450"/>
    <property type="match status" value="1"/>
</dbReference>
<comment type="function">
    <text evidence="3 4 5">Catalyzes the C6-oxidation step in brassinosteroids biosynthesis (PubMed:12427982, PubMed:12445121). May convert 6-deoxoteasterone (6-deoxoTE) to teasterone (TE), 3-dehydro-6-deoxoteasterone (6-deoxo3DT, 6-deoxo3DHT) to 3-dehydroteasterone (3DT, 3-DHT), and 6-deoxotyphasterol (6-deoxoTY) to typhasterol (TY) (PubMed:12427982, PubMed:12445121). Involved in the organization and elongation of the leaf and stem cells (PubMed:12427982, PubMed:12445121). Not able to convert 6-deoxocastasterone (6-deoxoCS) and castasterone (CS) to brassinolide (BL) (PubMed:18656444).</text>
</comment>
<comment type="catalytic activity">
    <reaction evidence="3 4">
        <text>6-deoxoteasterone + reduced [NADPH--hemoprotein reductase] + O2 = 6alpha-hydroxyteasterone + oxidized [NADPH--hemoprotein reductase] + H2O + H(+)</text>
        <dbReference type="Rhea" id="RHEA:69959"/>
        <dbReference type="Rhea" id="RHEA-COMP:11964"/>
        <dbReference type="Rhea" id="RHEA-COMP:11965"/>
        <dbReference type="ChEBI" id="CHEBI:15377"/>
        <dbReference type="ChEBI" id="CHEBI:15378"/>
        <dbReference type="ChEBI" id="CHEBI:15379"/>
        <dbReference type="ChEBI" id="CHEBI:20716"/>
        <dbReference type="ChEBI" id="CHEBI:57618"/>
        <dbReference type="ChEBI" id="CHEBI:58210"/>
        <dbReference type="ChEBI" id="CHEBI:188499"/>
    </reaction>
    <physiologicalReaction direction="left-to-right" evidence="3 4">
        <dbReference type="Rhea" id="RHEA:69960"/>
    </physiologicalReaction>
</comment>
<comment type="catalytic activity">
    <reaction evidence="3 4">
        <text>6alpha-hydroxytyphasterol + reduced [NADPH--hemoprotein reductase] + O2 = teasterone + oxidized [NADPH--hemoprotein reductase] + 2 H2O + H(+)</text>
        <dbReference type="Rhea" id="RHEA:69963"/>
        <dbReference type="Rhea" id="RHEA-COMP:11964"/>
        <dbReference type="Rhea" id="RHEA-COMP:11965"/>
        <dbReference type="ChEBI" id="CHEBI:15377"/>
        <dbReference type="ChEBI" id="CHEBI:15378"/>
        <dbReference type="ChEBI" id="CHEBI:15379"/>
        <dbReference type="ChEBI" id="CHEBI:26863"/>
        <dbReference type="ChEBI" id="CHEBI:57618"/>
        <dbReference type="ChEBI" id="CHEBI:58210"/>
        <dbReference type="ChEBI" id="CHEBI:188495"/>
    </reaction>
    <physiologicalReaction direction="left-to-right" evidence="3 4">
        <dbReference type="Rhea" id="RHEA:69964"/>
    </physiologicalReaction>
</comment>
<comment type="catalytic activity">
    <reaction evidence="3 4">
        <text>3-dehydro-6-deoxoteasterone + reduced [NADPH--hemoprotein reductase] + O2 = 3-dehydro-6alpha-hydroxyteasterone + oxidized [NADPH--hemoprotein reductase] + H2O + H(+)</text>
        <dbReference type="Rhea" id="RHEA:69947"/>
        <dbReference type="Rhea" id="RHEA-COMP:11964"/>
        <dbReference type="Rhea" id="RHEA-COMP:11965"/>
        <dbReference type="ChEBI" id="CHEBI:15377"/>
        <dbReference type="ChEBI" id="CHEBI:15378"/>
        <dbReference type="ChEBI" id="CHEBI:15379"/>
        <dbReference type="ChEBI" id="CHEBI:20710"/>
        <dbReference type="ChEBI" id="CHEBI:57618"/>
        <dbReference type="ChEBI" id="CHEBI:58210"/>
        <dbReference type="ChEBI" id="CHEBI:188496"/>
    </reaction>
    <physiologicalReaction direction="left-to-right" evidence="3 4">
        <dbReference type="Rhea" id="RHEA:69948"/>
    </physiologicalReaction>
</comment>
<comment type="catalytic activity">
    <reaction evidence="3 4">
        <text>3-dehydro-6alpha-hydroxyteasterone + reduced [NADPH--hemoprotein reductase] + O2 = 3-dehydroteasterone + oxidized [NADPH--hemoprotein reductase] + 2 H2O + H(+)</text>
        <dbReference type="Rhea" id="RHEA:69951"/>
        <dbReference type="Rhea" id="RHEA-COMP:11964"/>
        <dbReference type="Rhea" id="RHEA-COMP:11965"/>
        <dbReference type="ChEBI" id="CHEBI:15377"/>
        <dbReference type="ChEBI" id="CHEBI:15378"/>
        <dbReference type="ChEBI" id="CHEBI:15379"/>
        <dbReference type="ChEBI" id="CHEBI:20000"/>
        <dbReference type="ChEBI" id="CHEBI:57618"/>
        <dbReference type="ChEBI" id="CHEBI:58210"/>
        <dbReference type="ChEBI" id="CHEBI:188496"/>
    </reaction>
    <physiologicalReaction direction="left-to-right" evidence="3 4">
        <dbReference type="Rhea" id="RHEA:69952"/>
    </physiologicalReaction>
</comment>
<comment type="catalytic activity">
    <reaction evidence="3 4">
        <text>6-deoxotyphasterol + reduced [NADPH--hemoprotein reductase] + O2 = 6alpha-hydroxytyphasterol + oxidized [NADPH--hemoprotein reductase] + H2O + H(+)</text>
        <dbReference type="Rhea" id="RHEA:69939"/>
        <dbReference type="Rhea" id="RHEA-COMP:11964"/>
        <dbReference type="Rhea" id="RHEA-COMP:11965"/>
        <dbReference type="ChEBI" id="CHEBI:15377"/>
        <dbReference type="ChEBI" id="CHEBI:15378"/>
        <dbReference type="ChEBI" id="CHEBI:15379"/>
        <dbReference type="ChEBI" id="CHEBI:20717"/>
        <dbReference type="ChEBI" id="CHEBI:57618"/>
        <dbReference type="ChEBI" id="CHEBI:58210"/>
        <dbReference type="ChEBI" id="CHEBI:188495"/>
    </reaction>
    <physiologicalReaction direction="left-to-right" evidence="3 4">
        <dbReference type="Rhea" id="RHEA:69940"/>
    </physiologicalReaction>
</comment>
<comment type="catalytic activity">
    <reaction evidence="3 4">
        <text>6alpha-hydroxytyphasterol + reduced [NADPH--hemoprotein reductase] + O2 = typhasterol + oxidized [NADPH--hemoprotein reductase] + 2 H2O + H(+)</text>
        <dbReference type="Rhea" id="RHEA:69943"/>
        <dbReference type="Rhea" id="RHEA-COMP:11964"/>
        <dbReference type="Rhea" id="RHEA-COMP:11965"/>
        <dbReference type="ChEBI" id="CHEBI:15377"/>
        <dbReference type="ChEBI" id="CHEBI:15378"/>
        <dbReference type="ChEBI" id="CHEBI:15379"/>
        <dbReference type="ChEBI" id="CHEBI:27173"/>
        <dbReference type="ChEBI" id="CHEBI:57618"/>
        <dbReference type="ChEBI" id="CHEBI:58210"/>
        <dbReference type="ChEBI" id="CHEBI:188495"/>
    </reaction>
    <physiologicalReaction direction="left-to-right" evidence="3 4">
        <dbReference type="Rhea" id="RHEA:69944"/>
    </physiologicalReaction>
</comment>
<comment type="catalytic activity">
    <reaction evidence="3 4">
        <text>3-dehydro-6-deoxoteasterone + 2 reduced [NADPH--hemoprotein reductase] + 2 O2 = 3-dehydroteasterone + 2 oxidized [NADPH--hemoprotein reductase] + 3 H2O + 2 H(+)</text>
        <dbReference type="Rhea" id="RHEA:70039"/>
        <dbReference type="Rhea" id="RHEA-COMP:11964"/>
        <dbReference type="Rhea" id="RHEA-COMP:11965"/>
        <dbReference type="ChEBI" id="CHEBI:15377"/>
        <dbReference type="ChEBI" id="CHEBI:15378"/>
        <dbReference type="ChEBI" id="CHEBI:15379"/>
        <dbReference type="ChEBI" id="CHEBI:20000"/>
        <dbReference type="ChEBI" id="CHEBI:20710"/>
        <dbReference type="ChEBI" id="CHEBI:57618"/>
        <dbReference type="ChEBI" id="CHEBI:58210"/>
    </reaction>
    <physiologicalReaction direction="left-to-right" evidence="3 4">
        <dbReference type="Rhea" id="RHEA:70040"/>
    </physiologicalReaction>
</comment>
<comment type="catalytic activity">
    <reaction evidence="3 4">
        <text>6-deoxoteasterone + 2 reduced [NADPH--hemoprotein reductase] + 2 O2 = teasterone + 2 oxidized [NADPH--hemoprotein reductase] + 3 H2O + 2 H(+)</text>
        <dbReference type="Rhea" id="RHEA:70043"/>
        <dbReference type="Rhea" id="RHEA-COMP:11964"/>
        <dbReference type="Rhea" id="RHEA-COMP:11965"/>
        <dbReference type="ChEBI" id="CHEBI:15377"/>
        <dbReference type="ChEBI" id="CHEBI:15378"/>
        <dbReference type="ChEBI" id="CHEBI:15379"/>
        <dbReference type="ChEBI" id="CHEBI:20716"/>
        <dbReference type="ChEBI" id="CHEBI:26863"/>
        <dbReference type="ChEBI" id="CHEBI:57618"/>
        <dbReference type="ChEBI" id="CHEBI:58210"/>
    </reaction>
    <physiologicalReaction direction="left-to-right" evidence="3 4">
        <dbReference type="Rhea" id="RHEA:70044"/>
    </physiologicalReaction>
</comment>
<comment type="catalytic activity">
    <reaction evidence="3 4">
        <text>6-deoxotyphasterol + 2 reduced [NADPH--hemoprotein reductase] + 2 O2 = typhasterol + 2 oxidized [NADPH--hemoprotein reductase] + 3 H2O + 2 H(+)</text>
        <dbReference type="Rhea" id="RHEA:70035"/>
        <dbReference type="Rhea" id="RHEA-COMP:11964"/>
        <dbReference type="Rhea" id="RHEA-COMP:11965"/>
        <dbReference type="ChEBI" id="CHEBI:15377"/>
        <dbReference type="ChEBI" id="CHEBI:15378"/>
        <dbReference type="ChEBI" id="CHEBI:15379"/>
        <dbReference type="ChEBI" id="CHEBI:20717"/>
        <dbReference type="ChEBI" id="CHEBI:27173"/>
        <dbReference type="ChEBI" id="CHEBI:57618"/>
        <dbReference type="ChEBI" id="CHEBI:58210"/>
    </reaction>
    <physiologicalReaction direction="left-to-right" evidence="3 4">
        <dbReference type="Rhea" id="RHEA:70036"/>
    </physiologicalReaction>
</comment>
<comment type="cofactor">
    <cofactor evidence="1">
        <name>heme</name>
        <dbReference type="ChEBI" id="CHEBI:30413"/>
    </cofactor>
</comment>
<comment type="pathway">
    <text evidence="3 4">Plant hormone biosynthesis; brassinosteroid biosynthesis.</text>
</comment>
<comment type="subcellular location">
    <subcellularLocation>
        <location evidence="2">Membrane</location>
        <topology evidence="2">Single-pass membrane protein</topology>
    </subcellularLocation>
</comment>
<comment type="tissue specificity">
    <text evidence="4">Expressed at low levels in all the tissues, but preferentially in the leaf sheath.</text>
</comment>
<comment type="induction">
    <text evidence="4">Down-regulated by brassinolide (BL) in the brassinosteroid-deficient dwarf1 (brd1) mutant.</text>
</comment>
<comment type="disruption phenotype">
    <text evidence="3 4">Plants show a range of abnormalities in organ development and growth, with deficiency in the elongation of the stem and leaves, skotomorphogenesis, root differentiation and reproductive growth. Treatment with exogenous brassinolide (BL) rescues the abnormal phenotype.</text>
</comment>
<comment type="similarity">
    <text evidence="8">Belongs to the cytochrome P450 family.</text>
</comment>
<sequence>MVLVAIGVVVAAAVVVSSLLLRWNEVRYSRKRGLPPGTMGWPLFGETTEFLKQGPSFMKARRLRYGSVFRTHILGCPTVVCMEAELNRRALASEGRGFVPGYPQSMLDILGRNNIAAVQGPLHRAMRGAMLSLVRPAMIRSSLLPKIDAFMRSHLAAWSSSSSSAVVDIQAKTKEMALLSALRQIAGVSAGPLSDALKAELYTLVLGTISLPINLPGTNYYQGFKARKKLVAMLEQMIAERRSSGQVHDDMLDALLTGVEGTREKLTDEQIIDLIITLIYSGYETMSTTSMMAVKYLSDHPKALEQLRKEHFDIRKGKAPEDAIDWNDFKSMTFTRAVIFETLRLATVVNGLLRKTTQDVEMNGYVIPKGWRIYVYTREINYDPFLYPDPMTFNPWRWLEKNMESHPHFMLFGGGSRMCPGKEVGTVEIATFLHYFVTQYRWEEEGNNTILKFPRVEAPNGLHIRVQDY</sequence>
<gene>
    <name evidence="8" type="primary">CYP85A1</name>
    <name evidence="6 7" type="synonym">DWARF</name>
    <name evidence="8" type="ordered locus">Os03g0602300</name>
    <name evidence="8" type="ordered locus">LOC_Os03g40540</name>
    <name evidence="10" type="ORF">OJ1519_A12.12</name>
    <name evidence="9" type="ORF">OsJNBa0015G17.1</name>
</gene>
<evidence type="ECO:0000250" key="1">
    <source>
        <dbReference type="UniProtKB" id="P04798"/>
    </source>
</evidence>
<evidence type="ECO:0000255" key="2"/>
<evidence type="ECO:0000269" key="3">
    <source>
    </source>
</evidence>
<evidence type="ECO:0000269" key="4">
    <source>
    </source>
</evidence>
<evidence type="ECO:0000269" key="5">
    <source>
    </source>
</evidence>
<evidence type="ECO:0000303" key="6">
    <source>
    </source>
</evidence>
<evidence type="ECO:0000303" key="7">
    <source>
    </source>
</evidence>
<evidence type="ECO:0000305" key="8"/>
<evidence type="ECO:0000312" key="9">
    <source>
        <dbReference type="EMBL" id="ABF97501.1"/>
    </source>
</evidence>
<evidence type="ECO:0000312" key="10">
    <source>
        <dbReference type="EMBL" id="BAS85202.1"/>
    </source>
</evidence>